<reference key="1">
    <citation type="journal article" date="1992" name="Biomed. Res.">
        <title>Synaptocanalin I, a protein associated with brain omega-conotoxin-sensitive calcium channels.</title>
        <authorList>
            <person name="Morita T."/>
            <person name="Mori H."/>
            <person name="Sakimura K."/>
            <person name="Mishina M."/>
            <person name="Sekine Y."/>
            <person name="Tsugita A."/>
            <person name="Odani S."/>
            <person name="Horikawa H.P."/>
            <person name="Saisu H."/>
            <person name="Abe T."/>
        </authorList>
    </citation>
    <scope>NUCLEOTIDE SEQUENCE [MRNA]</scope>
    <source>
        <tissue>Brain</tissue>
    </source>
</reference>
<reference key="2">
    <citation type="submission" date="2007-07" db="EMBL/GenBank/DDBJ databases">
        <authorList>
            <consortium name="NIH - Mammalian Gene Collection (MGC) project"/>
        </authorList>
    </citation>
    <scope>NUCLEOTIDE SEQUENCE [LARGE SCALE MRNA]</scope>
    <source>
        <strain>Hereford</strain>
        <tissue>Ascending colon</tissue>
    </source>
</reference>
<reference key="3">
    <citation type="journal article" date="1993" name="Nature">
        <title>SNAP receptors implicated in vesicle targeting and fusion.</title>
        <authorList>
            <person name="Soellner T."/>
            <person name="Whiteheart S.W."/>
            <person name="Brunner M."/>
            <person name="Erdjument-Bromage H."/>
            <person name="Geromanos S."/>
            <person name="Tempst P."/>
            <person name="Rothman J.E."/>
        </authorList>
    </citation>
    <scope>PROTEIN SEQUENCE OF 46-81; 125-137 AND 158-181</scope>
</reference>
<reference key="4">
    <citation type="journal article" date="1996" name="Biochemistry">
        <title>Botulinum neurotoxin C1 cleaves both syntaxin and SNAP-25 in intact and permeabilized chromaffin cells: correlation with its blockade of catecholamine release.</title>
        <authorList>
            <person name="Foran P."/>
            <person name="Lawrence G.W."/>
            <person name="Shone C.C."/>
            <person name="Foster K.A."/>
            <person name="Dolly J.O."/>
        </authorList>
    </citation>
    <scope>PROTEOLYTIC CLEAVAGE (MICROBIAL INFECTION) BY C.BOTULINUM NEUROTOXIN TYPE C</scope>
    <source>
        <tissue>Chromaffin cell</tissue>
    </source>
</reference>
<proteinExistence type="evidence at protein level"/>
<feature type="chain" id="PRO_0000210191" description="Syntaxin-1B">
    <location>
        <begin position="1"/>
        <end position="288"/>
    </location>
</feature>
<feature type="topological domain" description="Cytoplasmic" evidence="4">
    <location>
        <begin position="1"/>
        <end position="264"/>
    </location>
</feature>
<feature type="transmembrane region" description="Helical; Anchor for type IV membrane protein" evidence="4">
    <location>
        <begin position="265"/>
        <end position="288"/>
    </location>
</feature>
<feature type="domain" description="t-SNARE coiled-coil homology" evidence="5">
    <location>
        <begin position="191"/>
        <end position="253"/>
    </location>
</feature>
<feature type="region of interest" description="Disordered" evidence="6">
    <location>
        <begin position="1"/>
        <end position="20"/>
    </location>
</feature>
<feature type="coiled-coil region" evidence="4">
    <location>
        <begin position="29"/>
        <end position="104"/>
    </location>
</feature>
<feature type="compositionally biased region" description="Basic and acidic residues" evidence="6">
    <location>
        <begin position="1"/>
        <end position="13"/>
    </location>
</feature>
<feature type="site" description="(Microbial infection) Cleavage; by C.botulinum neurotoxin type C (BoNT/C)" evidence="8">
    <location>
        <begin position="252"/>
        <end position="253"/>
    </location>
</feature>
<feature type="modified residue" description="Phosphoserine" evidence="2">
    <location>
        <position position="10"/>
    </location>
</feature>
<feature type="modified residue" description="Phosphoserine" evidence="3">
    <location>
        <position position="14"/>
    </location>
</feature>
<feature type="sequence conflict" description="In Ref. 3; AA sequence." evidence="7" ref="3">
    <original>T</original>
    <variation>A</variation>
    <location>
        <position position="79"/>
    </location>
</feature>
<name>STX1B_BOVIN</name>
<protein>
    <recommendedName>
        <fullName>Syntaxin-1B</fullName>
    </recommendedName>
    <alternativeName>
        <fullName>Synaptocanalin I</fullName>
    </alternativeName>
    <alternativeName>
        <fullName>Syntaxin-1B2</fullName>
    </alternativeName>
</protein>
<comment type="function">
    <text evidence="1">Potentially involved in docking of synaptic vesicles at presynaptic active zones. May mediate Ca(2+)-regulation of exocytosis acrosomal reaction in sperm (By similarity).</text>
</comment>
<comment type="subunit">
    <text evidence="1">Interacts with OTOF. Interacts with SYT6 and SYT8; the interaction is Ca(2+)-dependent (By similarity).</text>
</comment>
<comment type="subcellular location">
    <subcellularLocation>
        <location evidence="7">Membrane</location>
        <topology evidence="7">Single-pass type IV membrane protein</topology>
    </subcellularLocation>
</comment>
<comment type="PTM">
    <text evidence="1">Phosphorylated by CK2.</text>
</comment>
<comment type="PTM">
    <text evidence="8">(Microbial infection) Targeted and hydrolyzed by C.botulinum neurotoxin type C (BoNT/C); cleavage by BoNT/C inhibits neurotransmitter release (PubMed:8611567). Probably hydrolyzes the 252-Lys-|-Ala-253 bond.</text>
</comment>
<comment type="similarity">
    <text evidence="7">Belongs to the syntaxin family.</text>
</comment>
<accession>P61267</accession>
<accession>A6QR58</accession>
<accession>P41414</accession>
<evidence type="ECO:0000250" key="1"/>
<evidence type="ECO:0000250" key="2">
    <source>
        <dbReference type="UniProtKB" id="P61264"/>
    </source>
</evidence>
<evidence type="ECO:0000250" key="3">
    <source>
        <dbReference type="UniProtKB" id="P61266"/>
    </source>
</evidence>
<evidence type="ECO:0000255" key="4"/>
<evidence type="ECO:0000255" key="5">
    <source>
        <dbReference type="PROSITE-ProRule" id="PRU00202"/>
    </source>
</evidence>
<evidence type="ECO:0000256" key="6">
    <source>
        <dbReference type="SAM" id="MobiDB-lite"/>
    </source>
</evidence>
<evidence type="ECO:0000305" key="7"/>
<evidence type="ECO:0000305" key="8">
    <source>
    </source>
</evidence>
<gene>
    <name type="primary">STX1B</name>
    <name type="synonym">STX1B2</name>
</gene>
<dbReference type="EMBL" id="D14133">
    <property type="protein sequence ID" value="BAA03188.1"/>
    <property type="molecule type" value="mRNA"/>
</dbReference>
<dbReference type="EMBL" id="BC150124">
    <property type="protein sequence ID" value="AAI50125.1"/>
    <property type="molecule type" value="mRNA"/>
</dbReference>
<dbReference type="PIR" id="JU0136">
    <property type="entry name" value="JU0136"/>
</dbReference>
<dbReference type="RefSeq" id="NP_777043.1">
    <property type="nucleotide sequence ID" value="NM_174618.2"/>
</dbReference>
<dbReference type="SMR" id="P61267"/>
<dbReference type="CORUM" id="P61267"/>
<dbReference type="FunCoup" id="P61267">
    <property type="interactions" value="958"/>
</dbReference>
<dbReference type="STRING" id="9913.ENSBTAP00000064133"/>
<dbReference type="PaxDb" id="9913-ENSBTAP00000022704"/>
<dbReference type="Ensembl" id="ENSBTAT00000122624.1">
    <property type="protein sequence ID" value="ENSBTAP00000089784.1"/>
    <property type="gene ID" value="ENSBTAG00000002349.7"/>
</dbReference>
<dbReference type="GeneID" id="282377"/>
<dbReference type="KEGG" id="bta:282377"/>
<dbReference type="CTD" id="112755"/>
<dbReference type="VEuPathDB" id="HostDB:ENSBTAG00000002349"/>
<dbReference type="VGNC" id="VGNC:35437">
    <property type="gene designation" value="STX1B"/>
</dbReference>
<dbReference type="eggNOG" id="KOG0810">
    <property type="taxonomic scope" value="Eukaryota"/>
</dbReference>
<dbReference type="GeneTree" id="ENSGT01030000234627"/>
<dbReference type="HOGENOM" id="CLU_042423_2_2_1"/>
<dbReference type="InParanoid" id="P61267"/>
<dbReference type="OMA" id="RWICFIL"/>
<dbReference type="OrthoDB" id="10255013at2759"/>
<dbReference type="TreeFam" id="TF313763"/>
<dbReference type="Reactome" id="R-BTA-5682910">
    <property type="pathway name" value="LGI-ADAM interactions"/>
</dbReference>
<dbReference type="Proteomes" id="UP000009136">
    <property type="component" value="Chromosome 25"/>
</dbReference>
<dbReference type="Bgee" id="ENSBTAG00000002349">
    <property type="expression patterns" value="Expressed in prefrontal cortex and 63 other cell types or tissues"/>
</dbReference>
<dbReference type="GO" id="GO:0012505">
    <property type="term" value="C:endomembrane system"/>
    <property type="evidence" value="ECO:0000318"/>
    <property type="project" value="GO_Central"/>
</dbReference>
<dbReference type="GO" id="GO:0005886">
    <property type="term" value="C:plasma membrane"/>
    <property type="evidence" value="ECO:0000318"/>
    <property type="project" value="GO_Central"/>
</dbReference>
<dbReference type="GO" id="GO:0048787">
    <property type="term" value="C:presynaptic active zone membrane"/>
    <property type="evidence" value="ECO:0000318"/>
    <property type="project" value="GO_Central"/>
</dbReference>
<dbReference type="GO" id="GO:0031201">
    <property type="term" value="C:SNARE complex"/>
    <property type="evidence" value="ECO:0000318"/>
    <property type="project" value="GO_Central"/>
</dbReference>
<dbReference type="GO" id="GO:0005484">
    <property type="term" value="F:SNAP receptor activity"/>
    <property type="evidence" value="ECO:0000318"/>
    <property type="project" value="GO_Central"/>
</dbReference>
<dbReference type="GO" id="GO:0000149">
    <property type="term" value="F:SNARE binding"/>
    <property type="evidence" value="ECO:0000318"/>
    <property type="project" value="GO_Central"/>
</dbReference>
<dbReference type="GO" id="GO:0006887">
    <property type="term" value="P:exocytosis"/>
    <property type="evidence" value="ECO:0000318"/>
    <property type="project" value="GO_Central"/>
</dbReference>
<dbReference type="GO" id="GO:0006886">
    <property type="term" value="P:intracellular protein transport"/>
    <property type="evidence" value="ECO:0000318"/>
    <property type="project" value="GO_Central"/>
</dbReference>
<dbReference type="GO" id="GO:0031629">
    <property type="term" value="P:synaptic vesicle fusion to presynaptic active zone membrane"/>
    <property type="evidence" value="ECO:0000318"/>
    <property type="project" value="GO_Central"/>
</dbReference>
<dbReference type="GO" id="GO:0048278">
    <property type="term" value="P:vesicle docking"/>
    <property type="evidence" value="ECO:0000318"/>
    <property type="project" value="GO_Central"/>
</dbReference>
<dbReference type="CDD" id="cd15880">
    <property type="entry name" value="SNARE_syntaxin1"/>
    <property type="match status" value="1"/>
</dbReference>
<dbReference type="CDD" id="cd00179">
    <property type="entry name" value="SynN"/>
    <property type="match status" value="1"/>
</dbReference>
<dbReference type="FunFam" id="1.20.58.70:FF:000042">
    <property type="entry name" value="Syntaxin 11b, tandem duplicate 2"/>
    <property type="match status" value="1"/>
</dbReference>
<dbReference type="FunFam" id="1.20.5.110:FF:000005">
    <property type="entry name" value="Syntaxin 1B"/>
    <property type="match status" value="1"/>
</dbReference>
<dbReference type="Gene3D" id="1.20.5.110">
    <property type="match status" value="1"/>
</dbReference>
<dbReference type="Gene3D" id="1.20.58.70">
    <property type="match status" value="1"/>
</dbReference>
<dbReference type="InterPro" id="IPR010989">
    <property type="entry name" value="SNARE"/>
</dbReference>
<dbReference type="InterPro" id="IPR045242">
    <property type="entry name" value="Syntaxin"/>
</dbReference>
<dbReference type="InterPro" id="IPR006012">
    <property type="entry name" value="Syntaxin/epimorphin_CS"/>
</dbReference>
<dbReference type="InterPro" id="IPR006011">
    <property type="entry name" value="Syntaxin_N"/>
</dbReference>
<dbReference type="InterPro" id="IPR000727">
    <property type="entry name" value="T_SNARE_dom"/>
</dbReference>
<dbReference type="PANTHER" id="PTHR19957">
    <property type="entry name" value="SYNTAXIN"/>
    <property type="match status" value="1"/>
</dbReference>
<dbReference type="PANTHER" id="PTHR19957:SF334">
    <property type="entry name" value="SYNTAXIN-1B"/>
    <property type="match status" value="1"/>
</dbReference>
<dbReference type="Pfam" id="PF05739">
    <property type="entry name" value="SNARE"/>
    <property type="match status" value="1"/>
</dbReference>
<dbReference type="Pfam" id="PF00804">
    <property type="entry name" value="Syntaxin"/>
    <property type="match status" value="1"/>
</dbReference>
<dbReference type="SMART" id="SM00503">
    <property type="entry name" value="SynN"/>
    <property type="match status" value="1"/>
</dbReference>
<dbReference type="SMART" id="SM00397">
    <property type="entry name" value="t_SNARE"/>
    <property type="match status" value="1"/>
</dbReference>
<dbReference type="SUPFAM" id="SSF47661">
    <property type="entry name" value="t-snare proteins"/>
    <property type="match status" value="1"/>
</dbReference>
<dbReference type="PROSITE" id="PS00914">
    <property type="entry name" value="SYNTAXIN"/>
    <property type="match status" value="1"/>
</dbReference>
<dbReference type="PROSITE" id="PS50192">
    <property type="entry name" value="T_SNARE"/>
    <property type="match status" value="1"/>
</dbReference>
<keyword id="KW-0175">Coiled coil</keyword>
<keyword id="KW-0903">Direct protein sequencing</keyword>
<keyword id="KW-0472">Membrane</keyword>
<keyword id="KW-0532">Neurotransmitter transport</keyword>
<keyword id="KW-0597">Phosphoprotein</keyword>
<keyword id="KW-1185">Reference proteome</keyword>
<keyword id="KW-0812">Transmembrane</keyword>
<keyword id="KW-1133">Transmembrane helix</keyword>
<keyword id="KW-0813">Transport</keyword>
<sequence length="288" mass="33275">MKDRTQELRSAKDSDDEEEVVHVDRDHFMDEFFEQVEEIRGCIEKLSEDVEQVKKQHSAILAAPNPDEKTKQELEDLTTDIKKTANKVRSKLKAIEQSIEQEEGLNRSSADLRIRKTQHSTLSRKFVEVMTEYNATQSKYRDRCKDRIQRQLEITGRTTTNEELEDMLESGKLAIFTDDIKMDSQMTKQALNEIETRHNEIIKLETSIRELHDMFVDMAMLVESQGEMIDRIEYNVEHSVDYVERAVSDTKKAVKYQSKARRKKIMIIICCVVLGVVLASSIGGTLGL</sequence>
<organism>
    <name type="scientific">Bos taurus</name>
    <name type="common">Bovine</name>
    <dbReference type="NCBI Taxonomy" id="9913"/>
    <lineage>
        <taxon>Eukaryota</taxon>
        <taxon>Metazoa</taxon>
        <taxon>Chordata</taxon>
        <taxon>Craniata</taxon>
        <taxon>Vertebrata</taxon>
        <taxon>Euteleostomi</taxon>
        <taxon>Mammalia</taxon>
        <taxon>Eutheria</taxon>
        <taxon>Laurasiatheria</taxon>
        <taxon>Artiodactyla</taxon>
        <taxon>Ruminantia</taxon>
        <taxon>Pecora</taxon>
        <taxon>Bovidae</taxon>
        <taxon>Bovinae</taxon>
        <taxon>Bos</taxon>
    </lineage>
</organism>